<sequence length="111" mass="12352">MASAVLSASRVSRPLGRALPGLRRPMSSGAHGEEGSARMWKALTYFVALPGVGVSMLNVFLKSRHEEHERPPFVAYPHLRIRTKPFPWGDGNHTLFHNPHVNPLPTGYEDE</sequence>
<name>CX6A1_MOUSE</name>
<comment type="function">
    <text evidence="3">Component of the cytochrome c oxidase, the last enzyme in the mitochondrial electron transport chain which drives oxidative phosphorylation. The respiratory chain contains 3 multisubunit complexes succinate dehydrogenase (complex II, CII), ubiquinol-cytochrome c oxidoreductase (cytochrome b-c1 complex, complex III, CIII) and cytochrome c oxidase (complex IV, CIV), that cooperate to transfer electrons derived from NADH and succinate to molecular oxygen, creating an electrochemical gradient over the inner membrane that drives transmembrane transport and the ATP synthase. Cytochrome c oxidase is the component of the respiratory chain that catalyzes the reduction of oxygen to water. Electrons originating from reduced cytochrome c in the intermembrane space (IMS) are transferred via the dinuclear copper A center (CU(A)) of subunit 2 and heme A of subunit 1 to the active site in subunit 1, a binuclear center (BNC) formed by heme A3 and copper B (CU(B)). The BNC reduces molecular oxygen to 2 water molecules unsing 4 electrons from cytochrome c in the IMS and 4 protons from the mitochondrial matrix.</text>
</comment>
<comment type="pathway">
    <text evidence="3">Energy metabolism; oxidative phosphorylation.</text>
</comment>
<comment type="subunit">
    <text evidence="2">Component of the cytochrome c oxidase (complex IV, CIV), a multisubunit enzyme composed of 14 subunits. The complex is composed of a catalytic core of 3 subunits MT-CO1, MT-CO2 and MT-CO3, encoded in the mitochondrial DNA, and 11 supernumerary subunits COX4I, COX5A, COX5B, COX6A, COX6B, COX6C, COX7A, COX7B, COX7C, COX8 and NDUFA4, which are encoded in the nuclear genome. The complex exists as a monomer or a dimer and forms supercomplexes (SCs) in the inner mitochondrial membrane with NADH-ubiquinone oxidoreductase (complex I, CI) and ubiquinol-cytochrome c oxidoreductase (cytochrome b-c1 complex, complex III, CIII), resulting in different assemblies (supercomplex SCI(1)III(2)IV(1) and megacomplex MCI(2)III(2)IV(2)).</text>
</comment>
<comment type="subcellular location">
    <subcellularLocation>
        <location evidence="2">Mitochondrion inner membrane</location>
        <topology evidence="2">Single-pass membrane protein</topology>
    </subcellularLocation>
</comment>
<comment type="disruption phenotype">
    <text evidence="4">Mice have walking difficulties. Histologic examination shows thinned sciatic nerves and neurogenic muscular changes, including small angular fibers and small group atrophy. Electrophysiologic studies show delayed motor nerve conduction velocities compared to controls. COX activity and ATP contents in liver cells are decreased.</text>
</comment>
<comment type="similarity">
    <text evidence="5">Belongs to the cytochrome c oxidase subunit 6A family.</text>
</comment>
<comment type="sequence caution" evidence="5">
    <conflict type="erroneous initiation">
        <sequence resource="EMBL-CDS" id="AAA17836"/>
    </conflict>
    <text>Extended N-terminus.</text>
</comment>
<comment type="sequence caution" evidence="5">
    <conflict type="erroneous initiation">
        <sequence resource="EMBL-CDS" id="AAA53066"/>
    </conflict>
</comment>
<reference key="1">
    <citation type="journal article" date="1995" name="Biochim. Biophys. Acta">
        <title>Cloning, sequence analysis, and expression of a mouse cDNA encoding cytochrome c oxidase subunit VIa liver isoform.</title>
        <authorList>
            <person name="Grossman L.I."/>
            <person name="Rosenthal N.H."/>
            <person name="Akamatsu M."/>
            <person name="Erickson R.P."/>
        </authorList>
    </citation>
    <scope>NUCLEOTIDE SEQUENCE [MRNA]</scope>
    <source>
        <tissue>Liver</tissue>
    </source>
</reference>
<reference key="2">
    <citation type="submission" date="1994-04" db="EMBL/GenBank/DDBJ databases">
        <authorList>
            <person name="Newton D."/>
            <person name="Bowman L.H."/>
        </authorList>
    </citation>
    <scope>NUCLEOTIDE SEQUENCE [MRNA] OF 2-111</scope>
    <source>
        <strain>BALB/cJ</strain>
    </source>
</reference>
<reference key="3">
    <citation type="submission" date="2007-03" db="UniProtKB">
        <authorList>
            <person name="Lubec G."/>
            <person name="Klug S."/>
        </authorList>
    </citation>
    <scope>PROTEIN SEQUENCE OF 63-80 AND 83-111</scope>
    <scope>IDENTIFICATION BY MASS SPECTROMETRY</scope>
    <source>
        <tissue>Hippocampus</tissue>
    </source>
</reference>
<reference key="4">
    <citation type="journal article" date="2010" name="Cell">
        <title>A tissue-specific atlas of mouse protein phosphorylation and expression.</title>
        <authorList>
            <person name="Huttlin E.L."/>
            <person name="Jedrychowski M.P."/>
            <person name="Elias J.E."/>
            <person name="Goswami T."/>
            <person name="Rad R."/>
            <person name="Beausoleil S.A."/>
            <person name="Villen J."/>
            <person name="Haas W."/>
            <person name="Sowa M.E."/>
            <person name="Gygi S.P."/>
        </authorList>
    </citation>
    <scope>IDENTIFICATION BY MASS SPECTROMETRY [LARGE SCALE ANALYSIS]</scope>
    <source>
        <tissue>Brain</tissue>
        <tissue>Brown adipose tissue</tissue>
        <tissue>Heart</tissue>
        <tissue>Kidney</tissue>
        <tissue>Liver</tissue>
        <tissue>Lung</tissue>
        <tissue>Pancreas</tissue>
        <tissue>Spleen</tissue>
        <tissue>Testis</tissue>
    </source>
</reference>
<reference key="5">
    <citation type="journal article" date="2014" name="Am. J. Hum. Genet.">
        <title>A mutation of COX6A1 causes a recessive axonal or mixed form of Charcot-Marie-Tooth disease.</title>
        <authorList>
            <person name="Tamiya G."/>
            <person name="Makino S."/>
            <person name="Hayashi M."/>
            <person name="Abe A."/>
            <person name="Numakura C."/>
            <person name="Ueki M."/>
            <person name="Tanaka A."/>
            <person name="Ito C."/>
            <person name="Toshimori K."/>
            <person name="Ogawa N."/>
            <person name="Terashima T."/>
            <person name="Maegawa H."/>
            <person name="Yanagisawa D."/>
            <person name="Tooyama I."/>
            <person name="Tada M."/>
            <person name="Onodera O."/>
            <person name="Hayasaka K."/>
        </authorList>
    </citation>
    <scope>DISRUPTION PHENOTYPE</scope>
</reference>
<feature type="transit peptide" description="Mitochondrion" evidence="2">
    <location>
        <begin position="1"/>
        <end position="26"/>
    </location>
</feature>
<feature type="chain" id="PRO_0000006120" description="Cytochrome c oxidase subunit 6A1, mitochondrial">
    <location>
        <begin position="27"/>
        <end position="111"/>
    </location>
</feature>
<feature type="topological domain" description="Mitochondrial matrix" evidence="1">
    <location>
        <begin position="27"/>
        <end position="36"/>
    </location>
</feature>
<feature type="transmembrane region" description="Helical" evidence="1">
    <location>
        <begin position="37"/>
        <end position="61"/>
    </location>
</feature>
<feature type="topological domain" description="Mitochondrial intermembrane" evidence="1">
    <location>
        <begin position="62"/>
        <end position="111"/>
    </location>
</feature>
<gene>
    <name type="primary">Cox6a1</name>
    <name type="synonym">Cox6al</name>
</gene>
<dbReference type="EMBL" id="L06465">
    <property type="protein sequence ID" value="AAA53066.1"/>
    <property type="status" value="ALT_INIT"/>
    <property type="molecule type" value="mRNA"/>
</dbReference>
<dbReference type="EMBL" id="U08440">
    <property type="protein sequence ID" value="AAA17836.1"/>
    <property type="status" value="ALT_INIT"/>
    <property type="molecule type" value="mRNA"/>
</dbReference>
<dbReference type="CCDS" id="CCDS19590.1"/>
<dbReference type="RefSeq" id="NP_031774.2">
    <property type="nucleotide sequence ID" value="NM_007748.5"/>
</dbReference>
<dbReference type="EMDB" id="EMD-17989"/>
<dbReference type="EMDB" id="EMD-17990"/>
<dbReference type="EMDB" id="EMD-17991"/>
<dbReference type="SMR" id="P43024"/>
<dbReference type="BioGRID" id="198843">
    <property type="interactions" value="22"/>
</dbReference>
<dbReference type="CORUM" id="P43024"/>
<dbReference type="FunCoup" id="P43024">
    <property type="interactions" value="1941"/>
</dbReference>
<dbReference type="IntAct" id="P43024">
    <property type="interactions" value="2"/>
</dbReference>
<dbReference type="MINT" id="P43024"/>
<dbReference type="STRING" id="10090.ENSMUSP00000047661"/>
<dbReference type="GlyGen" id="P43024">
    <property type="glycosylation" value="1 site, 1 O-linked glycan (1 site)"/>
</dbReference>
<dbReference type="PhosphoSitePlus" id="P43024"/>
<dbReference type="SwissPalm" id="P43024"/>
<dbReference type="jPOST" id="P43024"/>
<dbReference type="PaxDb" id="10090-ENSMUSP00000047661"/>
<dbReference type="PeptideAtlas" id="P43024"/>
<dbReference type="ProteomicsDB" id="279242"/>
<dbReference type="Pumba" id="P43024"/>
<dbReference type="TopDownProteomics" id="P43024"/>
<dbReference type="DNASU" id="12861"/>
<dbReference type="Ensembl" id="ENSMUST00000040154.10">
    <property type="protein sequence ID" value="ENSMUSP00000047661.10"/>
    <property type="gene ID" value="ENSMUSG00000041697.10"/>
</dbReference>
<dbReference type="GeneID" id="12861"/>
<dbReference type="KEGG" id="mmu:12861"/>
<dbReference type="AGR" id="MGI:103099"/>
<dbReference type="CTD" id="1337"/>
<dbReference type="MGI" id="MGI:103099">
    <property type="gene designation" value="Cox6a1"/>
</dbReference>
<dbReference type="eggNOG" id="KOG3469">
    <property type="taxonomic scope" value="Eukaryota"/>
</dbReference>
<dbReference type="InParanoid" id="P43024"/>
<dbReference type="OMA" id="MWKTLTY"/>
<dbReference type="OrthoDB" id="5947505at2759"/>
<dbReference type="Reactome" id="R-MMU-5628897">
    <property type="pathway name" value="TP53 Regulates Metabolic Genes"/>
</dbReference>
<dbReference type="Reactome" id="R-MMU-611105">
    <property type="pathway name" value="Respiratory electron transport"/>
</dbReference>
<dbReference type="Reactome" id="R-MMU-9707564">
    <property type="pathway name" value="Cytoprotection by HMOX1"/>
</dbReference>
<dbReference type="Reactome" id="R-MMU-9864848">
    <property type="pathway name" value="Complex IV assembly"/>
</dbReference>
<dbReference type="UniPathway" id="UPA00705"/>
<dbReference type="BioGRID-ORCS" id="12861">
    <property type="hits" value="6 hits in 79 CRISPR screens"/>
</dbReference>
<dbReference type="ChiTaRS" id="Cox6a1">
    <property type="organism name" value="mouse"/>
</dbReference>
<dbReference type="PRO" id="PR:P43024"/>
<dbReference type="Proteomes" id="UP000000589">
    <property type="component" value="Chromosome 5"/>
</dbReference>
<dbReference type="RNAct" id="P43024">
    <property type="molecule type" value="protein"/>
</dbReference>
<dbReference type="GO" id="GO:0005743">
    <property type="term" value="C:mitochondrial inner membrane"/>
    <property type="evidence" value="ECO:0007669"/>
    <property type="project" value="UniProtKB-SubCell"/>
</dbReference>
<dbReference type="GO" id="GO:0005739">
    <property type="term" value="C:mitochondrion"/>
    <property type="evidence" value="ECO:0007005"/>
    <property type="project" value="MGI"/>
</dbReference>
<dbReference type="GO" id="GO:0043209">
    <property type="term" value="C:myelin sheath"/>
    <property type="evidence" value="ECO:0007005"/>
    <property type="project" value="UniProtKB"/>
</dbReference>
<dbReference type="GO" id="GO:0016491">
    <property type="term" value="F:oxidoreductase activity"/>
    <property type="evidence" value="ECO:0007669"/>
    <property type="project" value="UniProtKB-KW"/>
</dbReference>
<dbReference type="GO" id="GO:0006119">
    <property type="term" value="P:oxidative phosphorylation"/>
    <property type="evidence" value="ECO:0007669"/>
    <property type="project" value="UniProtKB-UniPathway"/>
</dbReference>
<dbReference type="CDD" id="cd00925">
    <property type="entry name" value="Cyt_c_Oxidase_VIa"/>
    <property type="match status" value="1"/>
</dbReference>
<dbReference type="FunFam" id="4.10.95.10:FF:000001">
    <property type="entry name" value="Cytochrome c oxidase subunit 6A, mitochondrial"/>
    <property type="match status" value="1"/>
</dbReference>
<dbReference type="Gene3D" id="4.10.95.10">
    <property type="entry name" value="Cytochrome c oxidase, subunit VIa"/>
    <property type="match status" value="1"/>
</dbReference>
<dbReference type="InterPro" id="IPR001349">
    <property type="entry name" value="Cyt_c_oxidase_su6a"/>
</dbReference>
<dbReference type="InterPro" id="IPR018507">
    <property type="entry name" value="Cyt_c_oxidase_su6a_CS"/>
</dbReference>
<dbReference type="InterPro" id="IPR036418">
    <property type="entry name" value="Cyt_c_oxidase_su6a_sf"/>
</dbReference>
<dbReference type="PANTHER" id="PTHR11504">
    <property type="entry name" value="CYTOCHROME C OXIDASE POLYPEPTIDE VIA"/>
    <property type="match status" value="1"/>
</dbReference>
<dbReference type="PANTHER" id="PTHR11504:SF4">
    <property type="entry name" value="CYTOCHROME C OXIDASE SUBUNIT 6A1, MITOCHONDRIAL"/>
    <property type="match status" value="1"/>
</dbReference>
<dbReference type="Pfam" id="PF02046">
    <property type="entry name" value="COX6A"/>
    <property type="match status" value="1"/>
</dbReference>
<dbReference type="PIRSF" id="PIRSF000277">
    <property type="entry name" value="COX6A1"/>
    <property type="match status" value="1"/>
</dbReference>
<dbReference type="SUPFAM" id="SSF81411">
    <property type="entry name" value="Mitochondrial cytochrome c oxidase subunit VIa"/>
    <property type="match status" value="1"/>
</dbReference>
<dbReference type="PROSITE" id="PS01329">
    <property type="entry name" value="COX6A"/>
    <property type="match status" value="1"/>
</dbReference>
<accession>P43024</accession>
<protein>
    <recommendedName>
        <fullName>Cytochrome c oxidase subunit 6A1, mitochondrial</fullName>
    </recommendedName>
    <alternativeName>
        <fullName>Cytochrome c oxidase polypeptide VIa-liver</fullName>
    </alternativeName>
</protein>
<keyword id="KW-0903">Direct protein sequencing</keyword>
<keyword id="KW-0472">Membrane</keyword>
<keyword id="KW-0496">Mitochondrion</keyword>
<keyword id="KW-0999">Mitochondrion inner membrane</keyword>
<keyword id="KW-0560">Oxidoreductase</keyword>
<keyword id="KW-1185">Reference proteome</keyword>
<keyword id="KW-0809">Transit peptide</keyword>
<keyword id="KW-0812">Transmembrane</keyword>
<keyword id="KW-1133">Transmembrane helix</keyword>
<evidence type="ECO:0000250" key="1">
    <source>
        <dbReference type="UniProtKB" id="P07471"/>
    </source>
</evidence>
<evidence type="ECO:0000250" key="2">
    <source>
        <dbReference type="UniProtKB" id="P12074"/>
    </source>
</evidence>
<evidence type="ECO:0000250" key="3">
    <source>
        <dbReference type="UniProtKB" id="P32799"/>
    </source>
</evidence>
<evidence type="ECO:0000269" key="4">
    <source>
    </source>
</evidence>
<evidence type="ECO:0000305" key="5"/>
<proteinExistence type="evidence at protein level"/>
<organism>
    <name type="scientific">Mus musculus</name>
    <name type="common">Mouse</name>
    <dbReference type="NCBI Taxonomy" id="10090"/>
    <lineage>
        <taxon>Eukaryota</taxon>
        <taxon>Metazoa</taxon>
        <taxon>Chordata</taxon>
        <taxon>Craniata</taxon>
        <taxon>Vertebrata</taxon>
        <taxon>Euteleostomi</taxon>
        <taxon>Mammalia</taxon>
        <taxon>Eutheria</taxon>
        <taxon>Euarchontoglires</taxon>
        <taxon>Glires</taxon>
        <taxon>Rodentia</taxon>
        <taxon>Myomorpha</taxon>
        <taxon>Muroidea</taxon>
        <taxon>Muridae</taxon>
        <taxon>Murinae</taxon>
        <taxon>Mus</taxon>
        <taxon>Mus</taxon>
    </lineage>
</organism>